<sequence>MRGAARAAWGRAGQPWPRPPAPGPPPPPLPLLLLLLAGLLGGAGAQYSSDRCSWKGSGLTHEAHRKEVEQVYLRCAAGAVEWMYPTGALIVNLRPNTFSPARHLTVCIRSFTDSSGANIYLEKTGELRLLVPDGDGRPGRVQCFGLEQGGLFVEATPQQDIGRRTTGFQYELVRRHRASDLHELSAPCRPCSDTEVLLAVCTSDFAVRGSIQQVTHEPERQDSAIHLRVSRLYRQKSRVFEPVPEGDGHWQGRVRTLLECGVRPGHGDFLFTGHMHFGEARLGCAPRFKDFQRMYRDAQERGLNPCEVGTD</sequence>
<feature type="signal peptide" evidence="2">
    <location>
        <begin position="1"/>
        <end position="45"/>
    </location>
</feature>
<feature type="chain" id="PRO_0000289104" description="Meteorin-like protein">
    <location>
        <begin position="46"/>
        <end position="311"/>
    </location>
</feature>
<feature type="region of interest" description="Disordered" evidence="4">
    <location>
        <begin position="1"/>
        <end position="24"/>
    </location>
</feature>
<feature type="compositionally biased region" description="Low complexity" evidence="4">
    <location>
        <begin position="1"/>
        <end position="13"/>
    </location>
</feature>
<feature type="disulfide bond" evidence="3">
    <location>
        <begin position="52"/>
        <end position="75"/>
    </location>
</feature>
<feature type="disulfide bond" evidence="3">
    <location>
        <begin position="107"/>
        <end position="143"/>
    </location>
</feature>
<feature type="disulfide bond" evidence="3">
    <location>
        <begin position="188"/>
        <end position="260"/>
    </location>
</feature>
<feature type="disulfide bond" evidence="3">
    <location>
        <begin position="191"/>
        <end position="284"/>
    </location>
</feature>
<feature type="disulfide bond" evidence="3">
    <location>
        <begin position="201"/>
        <end position="306"/>
    </location>
</feature>
<feature type="splice variant" id="VSP_056101" description="In isoform 2." evidence="7">
    <location>
        <begin position="1"/>
        <end position="82"/>
    </location>
</feature>
<reference key="1">
    <citation type="journal article" date="2004" name="Nat. Genet.">
        <title>Complete sequencing and characterization of 21,243 full-length human cDNAs.</title>
        <authorList>
            <person name="Ota T."/>
            <person name="Suzuki Y."/>
            <person name="Nishikawa T."/>
            <person name="Otsuki T."/>
            <person name="Sugiyama T."/>
            <person name="Irie R."/>
            <person name="Wakamatsu A."/>
            <person name="Hayashi K."/>
            <person name="Sato H."/>
            <person name="Nagai K."/>
            <person name="Kimura K."/>
            <person name="Makita H."/>
            <person name="Sekine M."/>
            <person name="Obayashi M."/>
            <person name="Nishi T."/>
            <person name="Shibahara T."/>
            <person name="Tanaka T."/>
            <person name="Ishii S."/>
            <person name="Yamamoto J."/>
            <person name="Saito K."/>
            <person name="Kawai Y."/>
            <person name="Isono Y."/>
            <person name="Nakamura Y."/>
            <person name="Nagahari K."/>
            <person name="Murakami K."/>
            <person name="Yasuda T."/>
            <person name="Iwayanagi T."/>
            <person name="Wagatsuma M."/>
            <person name="Shiratori A."/>
            <person name="Sudo H."/>
            <person name="Hosoiri T."/>
            <person name="Kaku Y."/>
            <person name="Kodaira H."/>
            <person name="Kondo H."/>
            <person name="Sugawara M."/>
            <person name="Takahashi M."/>
            <person name="Kanda K."/>
            <person name="Yokoi T."/>
            <person name="Furuya T."/>
            <person name="Kikkawa E."/>
            <person name="Omura Y."/>
            <person name="Abe K."/>
            <person name="Kamihara K."/>
            <person name="Katsuta N."/>
            <person name="Sato K."/>
            <person name="Tanikawa M."/>
            <person name="Yamazaki M."/>
            <person name="Ninomiya K."/>
            <person name="Ishibashi T."/>
            <person name="Yamashita H."/>
            <person name="Murakawa K."/>
            <person name="Fujimori K."/>
            <person name="Tanai H."/>
            <person name="Kimata M."/>
            <person name="Watanabe M."/>
            <person name="Hiraoka S."/>
            <person name="Chiba Y."/>
            <person name="Ishida S."/>
            <person name="Ono Y."/>
            <person name="Takiguchi S."/>
            <person name="Watanabe S."/>
            <person name="Yosida M."/>
            <person name="Hotuta T."/>
            <person name="Kusano J."/>
            <person name="Kanehori K."/>
            <person name="Takahashi-Fujii A."/>
            <person name="Hara H."/>
            <person name="Tanase T.-O."/>
            <person name="Nomura Y."/>
            <person name="Togiya S."/>
            <person name="Komai F."/>
            <person name="Hara R."/>
            <person name="Takeuchi K."/>
            <person name="Arita M."/>
            <person name="Imose N."/>
            <person name="Musashino K."/>
            <person name="Yuuki H."/>
            <person name="Oshima A."/>
            <person name="Sasaki N."/>
            <person name="Aotsuka S."/>
            <person name="Yoshikawa Y."/>
            <person name="Matsunawa H."/>
            <person name="Ichihara T."/>
            <person name="Shiohata N."/>
            <person name="Sano S."/>
            <person name="Moriya S."/>
            <person name="Momiyama H."/>
            <person name="Satoh N."/>
            <person name="Takami S."/>
            <person name="Terashima Y."/>
            <person name="Suzuki O."/>
            <person name="Nakagawa S."/>
            <person name="Senoh A."/>
            <person name="Mizoguchi H."/>
            <person name="Goto Y."/>
            <person name="Shimizu F."/>
            <person name="Wakebe H."/>
            <person name="Hishigaki H."/>
            <person name="Watanabe T."/>
            <person name="Sugiyama A."/>
            <person name="Takemoto M."/>
            <person name="Kawakami B."/>
            <person name="Yamazaki M."/>
            <person name="Watanabe K."/>
            <person name="Kumagai A."/>
            <person name="Itakura S."/>
            <person name="Fukuzumi Y."/>
            <person name="Fujimori Y."/>
            <person name="Komiyama M."/>
            <person name="Tashiro H."/>
            <person name="Tanigami A."/>
            <person name="Fujiwara T."/>
            <person name="Ono T."/>
            <person name="Yamada K."/>
            <person name="Fujii Y."/>
            <person name="Ozaki K."/>
            <person name="Hirao M."/>
            <person name="Ohmori Y."/>
            <person name="Kawabata A."/>
            <person name="Hikiji T."/>
            <person name="Kobatake N."/>
            <person name="Inagaki H."/>
            <person name="Ikema Y."/>
            <person name="Okamoto S."/>
            <person name="Okitani R."/>
            <person name="Kawakami T."/>
            <person name="Noguchi S."/>
            <person name="Itoh T."/>
            <person name="Shigeta K."/>
            <person name="Senba T."/>
            <person name="Matsumura K."/>
            <person name="Nakajima Y."/>
            <person name="Mizuno T."/>
            <person name="Morinaga M."/>
            <person name="Sasaki M."/>
            <person name="Togashi T."/>
            <person name="Oyama M."/>
            <person name="Hata H."/>
            <person name="Watanabe M."/>
            <person name="Komatsu T."/>
            <person name="Mizushima-Sugano J."/>
            <person name="Satoh T."/>
            <person name="Shirai Y."/>
            <person name="Takahashi Y."/>
            <person name="Nakagawa K."/>
            <person name="Okumura K."/>
            <person name="Nagase T."/>
            <person name="Nomura N."/>
            <person name="Kikuchi H."/>
            <person name="Masuho Y."/>
            <person name="Yamashita R."/>
            <person name="Nakai K."/>
            <person name="Yada T."/>
            <person name="Nakamura Y."/>
            <person name="Ohara O."/>
            <person name="Isogai T."/>
            <person name="Sugano S."/>
        </authorList>
    </citation>
    <scope>NUCLEOTIDE SEQUENCE [LARGE SCALE MRNA] (ISOFORM 2)</scope>
    <source>
        <tissue>Thymus</tissue>
    </source>
</reference>
<reference key="2">
    <citation type="journal article" date="2006" name="Nature">
        <title>DNA sequence of human chromosome 17 and analysis of rearrangement in the human lineage.</title>
        <authorList>
            <person name="Zody M.C."/>
            <person name="Garber M."/>
            <person name="Adams D.J."/>
            <person name="Sharpe T."/>
            <person name="Harrow J."/>
            <person name="Lupski J.R."/>
            <person name="Nicholson C."/>
            <person name="Searle S.M."/>
            <person name="Wilming L."/>
            <person name="Young S.K."/>
            <person name="Abouelleil A."/>
            <person name="Allen N.R."/>
            <person name="Bi W."/>
            <person name="Bloom T."/>
            <person name="Borowsky M.L."/>
            <person name="Bugalter B.E."/>
            <person name="Butler J."/>
            <person name="Chang J.L."/>
            <person name="Chen C.-K."/>
            <person name="Cook A."/>
            <person name="Corum B."/>
            <person name="Cuomo C.A."/>
            <person name="de Jong P.J."/>
            <person name="DeCaprio D."/>
            <person name="Dewar K."/>
            <person name="FitzGerald M."/>
            <person name="Gilbert J."/>
            <person name="Gibson R."/>
            <person name="Gnerre S."/>
            <person name="Goldstein S."/>
            <person name="Grafham D.V."/>
            <person name="Grocock R."/>
            <person name="Hafez N."/>
            <person name="Hagopian D.S."/>
            <person name="Hart E."/>
            <person name="Norman C.H."/>
            <person name="Humphray S."/>
            <person name="Jaffe D.B."/>
            <person name="Jones M."/>
            <person name="Kamal M."/>
            <person name="Khodiyar V.K."/>
            <person name="LaButti K."/>
            <person name="Laird G."/>
            <person name="Lehoczky J."/>
            <person name="Liu X."/>
            <person name="Lokyitsang T."/>
            <person name="Loveland J."/>
            <person name="Lui A."/>
            <person name="Macdonald P."/>
            <person name="Major J.E."/>
            <person name="Matthews L."/>
            <person name="Mauceli E."/>
            <person name="McCarroll S.A."/>
            <person name="Mihalev A.H."/>
            <person name="Mudge J."/>
            <person name="Nguyen C."/>
            <person name="Nicol R."/>
            <person name="O'Leary S.B."/>
            <person name="Osoegawa K."/>
            <person name="Schwartz D.C."/>
            <person name="Shaw-Smith C."/>
            <person name="Stankiewicz P."/>
            <person name="Steward C."/>
            <person name="Swarbreck D."/>
            <person name="Venkataraman V."/>
            <person name="Whittaker C.A."/>
            <person name="Yang X."/>
            <person name="Zimmer A.R."/>
            <person name="Bradley A."/>
            <person name="Hubbard T."/>
            <person name="Birren B.W."/>
            <person name="Rogers J."/>
            <person name="Lander E.S."/>
            <person name="Nusbaum C."/>
        </authorList>
    </citation>
    <scope>NUCLEOTIDE SEQUENCE [LARGE SCALE GENOMIC DNA]</scope>
</reference>
<reference key="3">
    <citation type="journal article" date="2004" name="Genome Res.">
        <title>The status, quality, and expansion of the NIH full-length cDNA project: the Mammalian Gene Collection (MGC).</title>
        <authorList>
            <consortium name="The MGC Project Team"/>
        </authorList>
    </citation>
    <scope>NUCLEOTIDE SEQUENCE [LARGE SCALE MRNA] (ISOFORM 1)</scope>
    <source>
        <tissue>Blood</tissue>
        <tissue>Spleen</tissue>
    </source>
</reference>
<reference key="4">
    <citation type="journal article" date="2014" name="Cell">
        <title>Meteorin-like is a hormone that regulates immune-adipose interactions to increase beige fat thermogenesis.</title>
        <authorList>
            <person name="Rao R.R."/>
            <person name="Long J.Z."/>
            <person name="White J.P."/>
            <person name="Svensson K.J."/>
            <person name="Lou J."/>
            <person name="Lokurkar I."/>
            <person name="Jedrychowski M.P."/>
            <person name="Ruas J.L."/>
            <person name="Wrann C.D."/>
            <person name="Lo J.C."/>
            <person name="Camera D.M."/>
            <person name="Lachey J."/>
            <person name="Gygi S."/>
            <person name="Seehra J."/>
            <person name="Hawley J.A."/>
            <person name="Spiegelman B.M."/>
        </authorList>
    </citation>
    <scope>TISSUE SPECIFICITY</scope>
</reference>
<reference key="5">
    <citation type="journal article" date="2014" name="CNS Neurosci. Ther.">
        <title>Subfatin is a novel adipokine and unlike Meteorin in adipose and brain expression.</title>
        <authorList>
            <person name="Li Z.Y."/>
            <person name="Zheng S.L."/>
            <person name="Wang P."/>
            <person name="Xu T.Y."/>
            <person name="Guan Y.F."/>
            <person name="Zhang Y.J."/>
            <person name="Miao C.Y."/>
        </authorList>
    </citation>
    <scope>TISSUE SPECIFICITY</scope>
</reference>
<comment type="function">
    <text evidence="1">Hormone induced following exercise or cold exposure that promotes energy expenditure. Induced either in the skeletal muscle after exercise or in adipose tissue following cold exposure and is present in the circulation. Able to stimulate energy expenditure associated with the browning of the white fat depots and improves glucose tolerance. Does not promote an increase in a thermogenic gene program via direct action on adipocytes, but acts by stimulating several immune cell subtypes to enter the adipose tissue and activate their prothermogenic actions. Stimulates an eosinophil-dependent increase in IL4 expression and promotes alternative activation of adipose tissue macrophages, which are required for the increased expression of the thermogenic and anti-inflammatory gene programs in fat. Required for some cold-induced thermogenic responses, suggesting a role in metabolic adaptations to cold temperatures (By similarity).</text>
</comment>
<comment type="subcellular location">
    <subcellularLocation>
        <location evidence="1">Secreted</location>
    </subcellularLocation>
</comment>
<comment type="alternative products">
    <event type="alternative splicing"/>
    <isoform>
        <id>Q641Q3-1</id>
        <name>1</name>
        <sequence type="displayed"/>
    </isoform>
    <isoform>
        <id>Q641Q3-2</id>
        <name>2</name>
        <sequence type="described" ref="VSP_056101"/>
    </isoform>
</comment>
<comment type="tissue specificity">
    <text evidence="5 6">Highly expressed in the skeletal muscle, in subcutaneous adipose tissue, epididymal white adipose tissue depots and heart. Also expressed in brown adipose tissues and kidney.</text>
</comment>
<comment type="similarity">
    <text evidence="8">Belongs to the meteorin family.</text>
</comment>
<comment type="sequence caution" evidence="8">
    <conflict type="erroneous initiation">
        <sequence resource="EMBL-CDS" id="AAH50568"/>
    </conflict>
</comment>
<protein>
    <recommendedName>
        <fullName>Meteorin-like protein</fullName>
    </recommendedName>
    <alternativeName>
        <fullName>Subfatin</fullName>
    </alternativeName>
</protein>
<keyword id="KW-0025">Alternative splicing</keyword>
<keyword id="KW-1015">Disulfide bond</keyword>
<keyword id="KW-0372">Hormone</keyword>
<keyword id="KW-1267">Proteomics identification</keyword>
<keyword id="KW-1185">Reference proteome</keyword>
<keyword id="KW-0964">Secreted</keyword>
<keyword id="KW-0732">Signal</keyword>
<organism>
    <name type="scientific">Homo sapiens</name>
    <name type="common">Human</name>
    <dbReference type="NCBI Taxonomy" id="9606"/>
    <lineage>
        <taxon>Eukaryota</taxon>
        <taxon>Metazoa</taxon>
        <taxon>Chordata</taxon>
        <taxon>Craniata</taxon>
        <taxon>Vertebrata</taxon>
        <taxon>Euteleostomi</taxon>
        <taxon>Mammalia</taxon>
        <taxon>Eutheria</taxon>
        <taxon>Euarchontoglires</taxon>
        <taxon>Primates</taxon>
        <taxon>Haplorrhini</taxon>
        <taxon>Catarrhini</taxon>
        <taxon>Hominidae</taxon>
        <taxon>Homo</taxon>
    </lineage>
</organism>
<evidence type="ECO:0000250" key="1"/>
<evidence type="ECO:0000255" key="2"/>
<evidence type="ECO:0000255" key="3">
    <source>
        <dbReference type="PROSITE-ProRule" id="PRU00114"/>
    </source>
</evidence>
<evidence type="ECO:0000256" key="4">
    <source>
        <dbReference type="SAM" id="MobiDB-lite"/>
    </source>
</evidence>
<evidence type="ECO:0000269" key="5">
    <source>
    </source>
</evidence>
<evidence type="ECO:0000269" key="6">
    <source>
    </source>
</evidence>
<evidence type="ECO:0000303" key="7">
    <source>
    </source>
</evidence>
<evidence type="ECO:0000305" key="8"/>
<dbReference type="EMBL" id="AK093748">
    <property type="protein sequence ID" value="BAG52757.1"/>
    <property type="molecule type" value="mRNA"/>
</dbReference>
<dbReference type="EMBL" id="AC130371">
    <property type="status" value="NOT_ANNOTATED_CDS"/>
    <property type="molecule type" value="Genomic_DNA"/>
</dbReference>
<dbReference type="EMBL" id="AC144831">
    <property type="status" value="NOT_ANNOTATED_CDS"/>
    <property type="molecule type" value="Genomic_DNA"/>
</dbReference>
<dbReference type="EMBL" id="BC050568">
    <property type="protein sequence ID" value="AAH50568.1"/>
    <property type="status" value="ALT_INIT"/>
    <property type="molecule type" value="mRNA"/>
</dbReference>
<dbReference type="EMBL" id="BC082252">
    <property type="protein sequence ID" value="AAH82252.1"/>
    <property type="molecule type" value="mRNA"/>
</dbReference>
<dbReference type="CCDS" id="CCDS32779.1">
    <molecule id="Q641Q3-1"/>
</dbReference>
<dbReference type="CCDS" id="CCDS86656.1">
    <molecule id="Q641Q3-2"/>
</dbReference>
<dbReference type="RefSeq" id="NP_001004431.1">
    <molecule id="Q641Q3-1"/>
    <property type="nucleotide sequence ID" value="NM_001004431.3"/>
</dbReference>
<dbReference type="RefSeq" id="NP_001350782.1">
    <molecule id="Q641Q3-2"/>
    <property type="nucleotide sequence ID" value="NM_001363853.2"/>
</dbReference>
<dbReference type="RefSeq" id="XP_016880012.1">
    <property type="nucleotide sequence ID" value="XM_017024523.1"/>
</dbReference>
<dbReference type="SMR" id="Q641Q3"/>
<dbReference type="BioGRID" id="129788">
    <property type="interactions" value="112"/>
</dbReference>
<dbReference type="FunCoup" id="Q641Q3">
    <property type="interactions" value="269"/>
</dbReference>
<dbReference type="IntAct" id="Q641Q3">
    <property type="interactions" value="53"/>
</dbReference>
<dbReference type="STRING" id="9606.ENSP00000315731"/>
<dbReference type="GlyGen" id="Q641Q3">
    <property type="glycosylation" value="1 site, 1 O-linked glycan (1 site)"/>
</dbReference>
<dbReference type="iPTMnet" id="Q641Q3"/>
<dbReference type="PhosphoSitePlus" id="Q641Q3"/>
<dbReference type="BioMuta" id="METRNL"/>
<dbReference type="DMDM" id="74736273"/>
<dbReference type="jPOST" id="Q641Q3"/>
<dbReference type="MassIVE" id="Q641Q3"/>
<dbReference type="PaxDb" id="9606-ENSP00000315731"/>
<dbReference type="PeptideAtlas" id="Q641Q3"/>
<dbReference type="ProteomicsDB" id="3644"/>
<dbReference type="ProteomicsDB" id="65912">
    <molecule id="Q641Q3-1"/>
</dbReference>
<dbReference type="Antibodypedia" id="19928">
    <property type="antibodies" value="97 antibodies from 18 providers"/>
</dbReference>
<dbReference type="DNASU" id="284207"/>
<dbReference type="Ensembl" id="ENST00000320095.12">
    <molecule id="Q641Q3-1"/>
    <property type="protein sequence ID" value="ENSP00000315731.6"/>
    <property type="gene ID" value="ENSG00000176845.13"/>
</dbReference>
<dbReference type="Ensembl" id="ENST00000570778.5">
    <molecule id="Q641Q3-2"/>
    <property type="protein sequence ID" value="ENSP00000458566.1"/>
    <property type="gene ID" value="ENSG00000176845.13"/>
</dbReference>
<dbReference type="Ensembl" id="ENST00000571814.1">
    <molecule id="Q641Q3-2"/>
    <property type="protein sequence ID" value="ENSP00000460798.1"/>
    <property type="gene ID" value="ENSG00000176845.13"/>
</dbReference>
<dbReference type="Ensembl" id="ENST00000616599.2">
    <molecule id="Q641Q3-2"/>
    <property type="protein sequence ID" value="ENSP00000481759.2"/>
    <property type="gene ID" value="ENSG00000275031.2"/>
</dbReference>
<dbReference type="Ensembl" id="ENST00000633913.1">
    <molecule id="Q641Q3-1"/>
    <property type="protein sequence ID" value="ENSP00000488860.1"/>
    <property type="gene ID" value="ENSG00000275031.2"/>
</dbReference>
<dbReference type="Ensembl" id="ENST00000634158.1">
    <molecule id="Q641Q3-2"/>
    <property type="protein sequence ID" value="ENSP00000488881.1"/>
    <property type="gene ID" value="ENSG00000275031.2"/>
</dbReference>
<dbReference type="GeneID" id="284207"/>
<dbReference type="KEGG" id="hsa:284207"/>
<dbReference type="MANE-Select" id="ENST00000320095.12">
    <property type="protein sequence ID" value="ENSP00000315731.6"/>
    <property type="RefSeq nucleotide sequence ID" value="NM_001004431.3"/>
    <property type="RefSeq protein sequence ID" value="NP_001004431.1"/>
</dbReference>
<dbReference type="UCSC" id="uc002kgh.4">
    <molecule id="Q641Q3-1"/>
    <property type="organism name" value="human"/>
</dbReference>
<dbReference type="AGR" id="HGNC:27584"/>
<dbReference type="CTD" id="284207"/>
<dbReference type="DisGeNET" id="284207"/>
<dbReference type="GeneCards" id="METRNL"/>
<dbReference type="HGNC" id="HGNC:27584">
    <property type="gene designation" value="METRNL"/>
</dbReference>
<dbReference type="HPA" id="ENSG00000176845">
    <property type="expression patterns" value="Tissue enhanced (skin)"/>
</dbReference>
<dbReference type="MIM" id="616241">
    <property type="type" value="gene"/>
</dbReference>
<dbReference type="neXtProt" id="NX_Q641Q3"/>
<dbReference type="OpenTargets" id="ENSG00000176845"/>
<dbReference type="PharmGKB" id="PA134970048"/>
<dbReference type="VEuPathDB" id="HostDB:ENSG00000176845"/>
<dbReference type="eggNOG" id="ENOG502QUQB">
    <property type="taxonomic scope" value="Eukaryota"/>
</dbReference>
<dbReference type="GeneTree" id="ENSGT00390000001390"/>
<dbReference type="HOGENOM" id="CLU_069970_0_0_1"/>
<dbReference type="InParanoid" id="Q641Q3"/>
<dbReference type="OMA" id="ISFCQYS"/>
<dbReference type="OrthoDB" id="6092325at2759"/>
<dbReference type="PAN-GO" id="Q641Q3">
    <property type="GO annotations" value="4 GO annotations based on evolutionary models"/>
</dbReference>
<dbReference type="PhylomeDB" id="Q641Q3"/>
<dbReference type="TreeFam" id="TF330918"/>
<dbReference type="PathwayCommons" id="Q641Q3"/>
<dbReference type="SignaLink" id="Q641Q3"/>
<dbReference type="BioGRID-ORCS" id="284207">
    <property type="hits" value="23 hits in 1146 CRISPR screens"/>
</dbReference>
<dbReference type="ChiTaRS" id="METRNL">
    <property type="organism name" value="human"/>
</dbReference>
<dbReference type="GenomeRNAi" id="284207"/>
<dbReference type="Pharos" id="Q641Q3">
    <property type="development level" value="Tbio"/>
</dbReference>
<dbReference type="PRO" id="PR:Q641Q3"/>
<dbReference type="Proteomes" id="UP000005640">
    <property type="component" value="Chromosome 17"/>
</dbReference>
<dbReference type="RNAct" id="Q641Q3">
    <property type="molecule type" value="protein"/>
</dbReference>
<dbReference type="Bgee" id="ENSG00000176845">
    <property type="expression patterns" value="Expressed in lower esophagus mucosa and 98 other cell types or tissues"/>
</dbReference>
<dbReference type="ExpressionAtlas" id="Q641Q3">
    <property type="expression patterns" value="baseline and differential"/>
</dbReference>
<dbReference type="GO" id="GO:0070062">
    <property type="term" value="C:extracellular exosome"/>
    <property type="evidence" value="ECO:0007005"/>
    <property type="project" value="UniProtKB"/>
</dbReference>
<dbReference type="GO" id="GO:0005615">
    <property type="term" value="C:extracellular space"/>
    <property type="evidence" value="ECO:0000250"/>
    <property type="project" value="UniProtKB"/>
</dbReference>
<dbReference type="GO" id="GO:0005179">
    <property type="term" value="F:hormone activity"/>
    <property type="evidence" value="ECO:0000250"/>
    <property type="project" value="UniProtKB"/>
</dbReference>
<dbReference type="GO" id="GO:0050873">
    <property type="term" value="P:brown fat cell differentiation"/>
    <property type="evidence" value="ECO:0000250"/>
    <property type="project" value="UniProtKB"/>
</dbReference>
<dbReference type="GO" id="GO:0097009">
    <property type="term" value="P:energy homeostasis"/>
    <property type="evidence" value="ECO:0000250"/>
    <property type="project" value="UniProtKB"/>
</dbReference>
<dbReference type="GO" id="GO:0045444">
    <property type="term" value="P:fat cell differentiation"/>
    <property type="evidence" value="ECO:0000250"/>
    <property type="project" value="CAFA"/>
</dbReference>
<dbReference type="GO" id="GO:0050728">
    <property type="term" value="P:negative regulation of inflammatory response"/>
    <property type="evidence" value="ECO:0000250"/>
    <property type="project" value="UniProtKB"/>
</dbReference>
<dbReference type="GO" id="GO:0090336">
    <property type="term" value="P:positive regulation of brown fat cell differentiation"/>
    <property type="evidence" value="ECO:0000250"/>
    <property type="project" value="UniProtKB"/>
</dbReference>
<dbReference type="GO" id="GO:0009409">
    <property type="term" value="P:response to cold"/>
    <property type="evidence" value="ECO:0000250"/>
    <property type="project" value="UniProtKB"/>
</dbReference>
<dbReference type="GO" id="GO:0014850">
    <property type="term" value="P:response to muscle activity"/>
    <property type="evidence" value="ECO:0000250"/>
    <property type="project" value="UniProtKB"/>
</dbReference>
<dbReference type="InterPro" id="IPR051998">
    <property type="entry name" value="Meteorin-like"/>
</dbReference>
<dbReference type="PANTHER" id="PTHR28593">
    <property type="entry name" value="METEORIN-LIKE PROTEIN"/>
    <property type="match status" value="1"/>
</dbReference>
<dbReference type="PANTHER" id="PTHR28593:SF1">
    <property type="entry name" value="METEORIN-LIKE PROTEIN"/>
    <property type="match status" value="1"/>
</dbReference>
<gene>
    <name type="primary">METRNL</name>
</gene>
<proteinExistence type="evidence at protein level"/>
<accession>Q641Q3</accession>
<accession>B3KSJ5</accession>
<accession>Q86VM0</accession>
<name>METRL_HUMAN</name>